<name>CARD_PECCC</name>
<comment type="pathway">
    <text>Antibiotic biosynthesis; carbapenem biosynthesis.</text>
</comment>
<comment type="similarity">
    <text evidence="1">Belongs to the proline oxidase family.</text>
</comment>
<sequence length="376" mass="42885">MPNDLYAIYNRYTSRTLFFKYCATATLTHRLTRRLSLFTLKKCLARPQGRLFSLVNSIYFGGETLEEVQSTATFLARSGIACVLDYAVEGENDETQFDKAMENTLRLIEMSQQTDSLPFVVIKPSSLGSVAVYARQSERLALDEASASAWSRIVTRFSRLFDYARSHGVHVMVDAEQTAIQPAVDRLVLDMMREFNRDSAVITLTLQFYLKDQLRFLDECYQRACQDNFLFGVKVVRGAYLEEEKRVNGGVRCFATKQETDRSYNAAVDYIALRLDRIAPFFATHNEESLALIMSSESLRAGRTWVGQLYGLGDHITYSLLQTGFRVCKYLPYGPLDKSLPYLLRRIEENAVASATFKKENKLLQKELLRRLVGGM</sequence>
<evidence type="ECO:0000305" key="1"/>
<proteinExistence type="inferred from homology"/>
<protein>
    <recommendedName>
        <fullName>Carbapenem antibiotics biosynthesis protein CarD</fullName>
    </recommendedName>
</protein>
<feature type="chain" id="PRO_0000174214" description="Carbapenem antibiotics biosynthesis protein CarD">
    <location>
        <begin position="1"/>
        <end position="376"/>
    </location>
</feature>
<keyword id="KW-0045">Antibiotic biosynthesis</keyword>
<keyword id="KW-0560">Oxidoreductase</keyword>
<organism>
    <name type="scientific">Pectobacterium carotovorum subsp. carotovorum</name>
    <name type="common">Erwinia carotovora subsp. carotovora</name>
    <dbReference type="NCBI Taxonomy" id="555"/>
    <lineage>
        <taxon>Bacteria</taxon>
        <taxon>Pseudomonadati</taxon>
        <taxon>Pseudomonadota</taxon>
        <taxon>Gammaproteobacteria</taxon>
        <taxon>Enterobacterales</taxon>
        <taxon>Pectobacteriaceae</taxon>
        <taxon>Pectobacterium</taxon>
    </lineage>
</organism>
<dbReference type="EMBL" id="U17224">
    <property type="protein sequence ID" value="AAD38232.1"/>
    <property type="molecule type" value="Genomic_DNA"/>
</dbReference>
<dbReference type="RefSeq" id="WP_110163356.1">
    <property type="nucleotide sequence ID" value="NZ_QHMC01000009.1"/>
</dbReference>
<dbReference type="SMR" id="Q9XB58"/>
<dbReference type="UniPathway" id="UPA00182"/>
<dbReference type="GO" id="GO:0071949">
    <property type="term" value="F:FAD binding"/>
    <property type="evidence" value="ECO:0007669"/>
    <property type="project" value="TreeGrafter"/>
</dbReference>
<dbReference type="GO" id="GO:0004657">
    <property type="term" value="F:proline dehydrogenase activity"/>
    <property type="evidence" value="ECO:0007669"/>
    <property type="project" value="InterPro"/>
</dbReference>
<dbReference type="GO" id="GO:0017000">
    <property type="term" value="P:antibiotic biosynthetic process"/>
    <property type="evidence" value="ECO:0007669"/>
    <property type="project" value="UniProtKB-KW"/>
</dbReference>
<dbReference type="GO" id="GO:0010133">
    <property type="term" value="P:proline catabolic process to glutamate"/>
    <property type="evidence" value="ECO:0007669"/>
    <property type="project" value="TreeGrafter"/>
</dbReference>
<dbReference type="Gene3D" id="3.20.20.220">
    <property type="match status" value="1"/>
</dbReference>
<dbReference type="InterPro" id="IPR029041">
    <property type="entry name" value="FAD-linked_oxidoreductase-like"/>
</dbReference>
<dbReference type="InterPro" id="IPR002872">
    <property type="entry name" value="Proline_DH_dom"/>
</dbReference>
<dbReference type="InterPro" id="IPR015659">
    <property type="entry name" value="Proline_oxidase"/>
</dbReference>
<dbReference type="PANTHER" id="PTHR13914:SF0">
    <property type="entry name" value="PROLINE DEHYDROGENASE 1, MITOCHONDRIAL"/>
    <property type="match status" value="1"/>
</dbReference>
<dbReference type="PANTHER" id="PTHR13914">
    <property type="entry name" value="PROLINE OXIDASE"/>
    <property type="match status" value="1"/>
</dbReference>
<dbReference type="Pfam" id="PF01619">
    <property type="entry name" value="Pro_dh"/>
    <property type="match status" value="1"/>
</dbReference>
<dbReference type="SUPFAM" id="SSF51730">
    <property type="entry name" value="FAD-linked oxidoreductase"/>
    <property type="match status" value="1"/>
</dbReference>
<accession>Q9XB58</accession>
<gene>
    <name type="primary">carD</name>
</gene>
<reference key="1">
    <citation type="journal article" date="1997" name="Mol. Microbiol.">
        <title>Analysis of the carbapenem gene cluster of Erwinia carotovora: definition of the antibiotic biosynthetic genes and evidence for a novel beta-lactam resistance mechanism.</title>
        <authorList>
            <person name="McGowan S.J."/>
            <person name="Sebaihia M."/>
            <person name="O'Leary S."/>
            <person name="Hardie K.R."/>
            <person name="Williams P."/>
            <person name="Stewart G.S."/>
            <person name="Bycroft B.W."/>
            <person name="Salmond G.P."/>
        </authorList>
    </citation>
    <scope>NUCLEOTIDE SEQUENCE [GENOMIC DNA]</scope>
    <source>
        <strain>ATCC 39048 / GS101 / SC 12</strain>
    </source>
</reference>